<proteinExistence type="inferred from homology"/>
<sequence>MIKSELVQKIAEANPHLYQRDVENIVNAILDQIVDALAQGDRVELRGFGAFSVKQREARTGRNPRTGKQVDVSSKVVPYFKTGKEMRERLNGAA</sequence>
<evidence type="ECO:0000255" key="1">
    <source>
        <dbReference type="HAMAP-Rule" id="MF_00381"/>
    </source>
</evidence>
<comment type="function">
    <text evidence="1">This protein is one of the two subunits of integration host factor, a specific DNA-binding protein that functions in genetic recombination as well as in transcriptional and translational control.</text>
</comment>
<comment type="subunit">
    <text evidence="1">Heterodimer of an alpha and a beta chain.</text>
</comment>
<comment type="similarity">
    <text evidence="1">Belongs to the bacterial histone-like protein family.</text>
</comment>
<organism>
    <name type="scientific">Azorhizobium caulinodans (strain ATCC 43989 / DSM 5975 / JCM 20966 / LMG 6465 / NBRC 14845 / NCIMB 13405 / ORS 571)</name>
    <dbReference type="NCBI Taxonomy" id="438753"/>
    <lineage>
        <taxon>Bacteria</taxon>
        <taxon>Pseudomonadati</taxon>
        <taxon>Pseudomonadota</taxon>
        <taxon>Alphaproteobacteria</taxon>
        <taxon>Hyphomicrobiales</taxon>
        <taxon>Xanthobacteraceae</taxon>
        <taxon>Azorhizobium</taxon>
    </lineage>
</organism>
<gene>
    <name evidence="1" type="primary">ihfB</name>
    <name evidence="1" type="synonym">himD</name>
    <name type="ordered locus">AZC_3716</name>
</gene>
<reference key="1">
    <citation type="submission" date="2007-04" db="EMBL/GenBank/DDBJ databases">
        <title>Complete genome sequence of the nitrogen-fixing bacterium Azorhizobium caulinodans ORS571.</title>
        <authorList>
            <person name="Lee K.B."/>
            <person name="Backer P.D."/>
            <person name="Aono T."/>
            <person name="Liu C.T."/>
            <person name="Suzuki S."/>
            <person name="Suzuki T."/>
            <person name="Kaneko T."/>
            <person name="Yamada M."/>
            <person name="Tabata S."/>
            <person name="Kupfer D.M."/>
            <person name="Najar F.Z."/>
            <person name="Wiley G.B."/>
            <person name="Roe B."/>
            <person name="Binnewies T."/>
            <person name="Ussery D."/>
            <person name="Vereecke D."/>
            <person name="Gevers D."/>
            <person name="Holsters M."/>
            <person name="Oyaizu H."/>
        </authorList>
    </citation>
    <scope>NUCLEOTIDE SEQUENCE [LARGE SCALE GENOMIC DNA]</scope>
    <source>
        <strain>ATCC 43989 / DSM 5975 / JCM 20966 / LMG 6465 / NBRC 14845 / NCIMB 13405 / ORS 571</strain>
    </source>
</reference>
<accession>A8IN83</accession>
<protein>
    <recommendedName>
        <fullName evidence="1">Integration host factor subunit beta</fullName>
        <shortName evidence="1">IHF-beta</shortName>
    </recommendedName>
</protein>
<keyword id="KW-0233">DNA recombination</keyword>
<keyword id="KW-0238">DNA-binding</keyword>
<keyword id="KW-1185">Reference proteome</keyword>
<keyword id="KW-0804">Transcription</keyword>
<keyword id="KW-0805">Transcription regulation</keyword>
<keyword id="KW-0810">Translation regulation</keyword>
<feature type="chain" id="PRO_1000072176" description="Integration host factor subunit beta">
    <location>
        <begin position="1"/>
        <end position="94"/>
    </location>
</feature>
<name>IHFB_AZOC5</name>
<dbReference type="EMBL" id="AP009384">
    <property type="protein sequence ID" value="BAF89714.1"/>
    <property type="molecule type" value="Genomic_DNA"/>
</dbReference>
<dbReference type="RefSeq" id="WP_012172239.1">
    <property type="nucleotide sequence ID" value="NC_009937.1"/>
</dbReference>
<dbReference type="SMR" id="A8IN83"/>
<dbReference type="STRING" id="438753.AZC_3716"/>
<dbReference type="KEGG" id="azc:AZC_3716"/>
<dbReference type="eggNOG" id="COG0776">
    <property type="taxonomic scope" value="Bacteria"/>
</dbReference>
<dbReference type="HOGENOM" id="CLU_105066_2_0_5"/>
<dbReference type="Proteomes" id="UP000000270">
    <property type="component" value="Chromosome"/>
</dbReference>
<dbReference type="GO" id="GO:0005694">
    <property type="term" value="C:chromosome"/>
    <property type="evidence" value="ECO:0007669"/>
    <property type="project" value="InterPro"/>
</dbReference>
<dbReference type="GO" id="GO:0005829">
    <property type="term" value="C:cytosol"/>
    <property type="evidence" value="ECO:0007669"/>
    <property type="project" value="TreeGrafter"/>
</dbReference>
<dbReference type="GO" id="GO:0003677">
    <property type="term" value="F:DNA binding"/>
    <property type="evidence" value="ECO:0007669"/>
    <property type="project" value="UniProtKB-UniRule"/>
</dbReference>
<dbReference type="GO" id="GO:0030527">
    <property type="term" value="F:structural constituent of chromatin"/>
    <property type="evidence" value="ECO:0007669"/>
    <property type="project" value="InterPro"/>
</dbReference>
<dbReference type="GO" id="GO:0006310">
    <property type="term" value="P:DNA recombination"/>
    <property type="evidence" value="ECO:0007669"/>
    <property type="project" value="UniProtKB-UniRule"/>
</dbReference>
<dbReference type="GO" id="GO:0006355">
    <property type="term" value="P:regulation of DNA-templated transcription"/>
    <property type="evidence" value="ECO:0007669"/>
    <property type="project" value="UniProtKB-UniRule"/>
</dbReference>
<dbReference type="GO" id="GO:0006417">
    <property type="term" value="P:regulation of translation"/>
    <property type="evidence" value="ECO:0007669"/>
    <property type="project" value="UniProtKB-UniRule"/>
</dbReference>
<dbReference type="CDD" id="cd13836">
    <property type="entry name" value="IHF_B"/>
    <property type="match status" value="1"/>
</dbReference>
<dbReference type="FunFam" id="4.10.520.10:FF:000008">
    <property type="entry name" value="Integration host factor subunit beta"/>
    <property type="match status" value="1"/>
</dbReference>
<dbReference type="Gene3D" id="4.10.520.10">
    <property type="entry name" value="IHF-like DNA-binding proteins"/>
    <property type="match status" value="1"/>
</dbReference>
<dbReference type="HAMAP" id="MF_00381">
    <property type="entry name" value="IHF_beta"/>
    <property type="match status" value="1"/>
</dbReference>
<dbReference type="InterPro" id="IPR000119">
    <property type="entry name" value="Hist_DNA-bd"/>
</dbReference>
<dbReference type="InterPro" id="IPR020816">
    <property type="entry name" value="Histone-like_DNA-bd_CS"/>
</dbReference>
<dbReference type="InterPro" id="IPR010992">
    <property type="entry name" value="IHF-like_DNA-bd_dom_sf"/>
</dbReference>
<dbReference type="InterPro" id="IPR005685">
    <property type="entry name" value="IHF_beta"/>
</dbReference>
<dbReference type="NCBIfam" id="TIGR00988">
    <property type="entry name" value="hip"/>
    <property type="match status" value="1"/>
</dbReference>
<dbReference type="NCBIfam" id="NF001222">
    <property type="entry name" value="PRK00199.1"/>
    <property type="match status" value="1"/>
</dbReference>
<dbReference type="PANTHER" id="PTHR33175">
    <property type="entry name" value="DNA-BINDING PROTEIN HU"/>
    <property type="match status" value="1"/>
</dbReference>
<dbReference type="PANTHER" id="PTHR33175:SF5">
    <property type="entry name" value="INTEGRATION HOST FACTOR SUBUNIT BETA"/>
    <property type="match status" value="1"/>
</dbReference>
<dbReference type="Pfam" id="PF00216">
    <property type="entry name" value="Bac_DNA_binding"/>
    <property type="match status" value="1"/>
</dbReference>
<dbReference type="PRINTS" id="PR01727">
    <property type="entry name" value="DNABINDINGHU"/>
</dbReference>
<dbReference type="SMART" id="SM00411">
    <property type="entry name" value="BHL"/>
    <property type="match status" value="1"/>
</dbReference>
<dbReference type="SUPFAM" id="SSF47729">
    <property type="entry name" value="IHF-like DNA-binding proteins"/>
    <property type="match status" value="1"/>
</dbReference>
<dbReference type="PROSITE" id="PS00045">
    <property type="entry name" value="HISTONE_LIKE"/>
    <property type="match status" value="1"/>
</dbReference>